<keyword id="KW-0028">Amino-acid biosynthesis</keyword>
<keyword id="KW-0067">ATP-binding</keyword>
<keyword id="KW-0963">Cytoplasm</keyword>
<keyword id="KW-0418">Kinase</keyword>
<keyword id="KW-0547">Nucleotide-binding</keyword>
<keyword id="KW-1185">Reference proteome</keyword>
<keyword id="KW-0791">Threonine biosynthesis</keyword>
<keyword id="KW-0808">Transferase</keyword>
<sequence length="311" mass="34630">MFTIKIPATSANLGPGFDSLGLSLQLYNKFTFKRLKSSDIRIKIKEVDTGNIIELPIKDNLIYRAMMYLFERYDVRPEGIELMEEVAIPFARGLGSSATAILGGLFGANIMLGEPLEDEELLKIAVKLEKHPDNVVPALKGGFVINVLKGSDLYYKKINPGEQLRVILCIPEFQLKTEDLRQVLPRQIEFKDAVFNHSRTAFLTSCFYERDWESLRVAMQDRLHQDYRSSLIPGFDEVVKSAYDNGAVGVALSGAGPTVISFAKDKGDKIGEAMVKAFGHYNINSKYIETGLDNKGLILKGHKFSLSGGSR</sequence>
<protein>
    <recommendedName>
        <fullName evidence="1">Homoserine kinase</fullName>
        <shortName evidence="1">HK</shortName>
        <shortName evidence="1">HSK</shortName>
        <ecNumber evidence="1">2.7.1.39</ecNumber>
    </recommendedName>
</protein>
<evidence type="ECO:0000255" key="1">
    <source>
        <dbReference type="HAMAP-Rule" id="MF_00384"/>
    </source>
</evidence>
<dbReference type="EC" id="2.7.1.39" evidence="1"/>
<dbReference type="EMBL" id="CP001098">
    <property type="protein sequence ID" value="ACL69558.1"/>
    <property type="molecule type" value="Genomic_DNA"/>
</dbReference>
<dbReference type="RefSeq" id="WP_012635746.1">
    <property type="nucleotide sequence ID" value="NC_011899.1"/>
</dbReference>
<dbReference type="SMR" id="B8CW89"/>
<dbReference type="STRING" id="373903.Hore_08010"/>
<dbReference type="KEGG" id="hor:Hore_08010"/>
<dbReference type="eggNOG" id="COG0083">
    <property type="taxonomic scope" value="Bacteria"/>
</dbReference>
<dbReference type="HOGENOM" id="CLU_041243_0_2_9"/>
<dbReference type="OrthoDB" id="9769912at2"/>
<dbReference type="UniPathway" id="UPA00050">
    <property type="reaction ID" value="UER00064"/>
</dbReference>
<dbReference type="Proteomes" id="UP000000719">
    <property type="component" value="Chromosome"/>
</dbReference>
<dbReference type="GO" id="GO:0005737">
    <property type="term" value="C:cytoplasm"/>
    <property type="evidence" value="ECO:0007669"/>
    <property type="project" value="UniProtKB-SubCell"/>
</dbReference>
<dbReference type="GO" id="GO:0005524">
    <property type="term" value="F:ATP binding"/>
    <property type="evidence" value="ECO:0007669"/>
    <property type="project" value="UniProtKB-UniRule"/>
</dbReference>
<dbReference type="GO" id="GO:0004413">
    <property type="term" value="F:homoserine kinase activity"/>
    <property type="evidence" value="ECO:0007669"/>
    <property type="project" value="UniProtKB-UniRule"/>
</dbReference>
<dbReference type="GO" id="GO:0009088">
    <property type="term" value="P:threonine biosynthetic process"/>
    <property type="evidence" value="ECO:0007669"/>
    <property type="project" value="UniProtKB-UniRule"/>
</dbReference>
<dbReference type="Gene3D" id="3.30.230.10">
    <property type="match status" value="1"/>
</dbReference>
<dbReference type="Gene3D" id="3.30.70.890">
    <property type="entry name" value="GHMP kinase, C-terminal domain"/>
    <property type="match status" value="1"/>
</dbReference>
<dbReference type="HAMAP" id="MF_00384">
    <property type="entry name" value="Homoser_kinase"/>
    <property type="match status" value="1"/>
</dbReference>
<dbReference type="InterPro" id="IPR013750">
    <property type="entry name" value="GHMP_kinase_C_dom"/>
</dbReference>
<dbReference type="InterPro" id="IPR036554">
    <property type="entry name" value="GHMP_kinase_C_sf"/>
</dbReference>
<dbReference type="InterPro" id="IPR006204">
    <property type="entry name" value="GHMP_kinase_N_dom"/>
</dbReference>
<dbReference type="InterPro" id="IPR006203">
    <property type="entry name" value="GHMP_knse_ATP-bd_CS"/>
</dbReference>
<dbReference type="InterPro" id="IPR000870">
    <property type="entry name" value="Homoserine_kinase"/>
</dbReference>
<dbReference type="InterPro" id="IPR020568">
    <property type="entry name" value="Ribosomal_Su5_D2-typ_SF"/>
</dbReference>
<dbReference type="InterPro" id="IPR014721">
    <property type="entry name" value="Ribsml_uS5_D2-typ_fold_subgr"/>
</dbReference>
<dbReference type="NCBIfam" id="NF002288">
    <property type="entry name" value="PRK01212.1-4"/>
    <property type="match status" value="1"/>
</dbReference>
<dbReference type="NCBIfam" id="TIGR00191">
    <property type="entry name" value="thrB"/>
    <property type="match status" value="1"/>
</dbReference>
<dbReference type="PANTHER" id="PTHR20861:SF1">
    <property type="entry name" value="HOMOSERINE KINASE"/>
    <property type="match status" value="1"/>
</dbReference>
<dbReference type="PANTHER" id="PTHR20861">
    <property type="entry name" value="HOMOSERINE/4-DIPHOSPHOCYTIDYL-2-C-METHYL-D-ERYTHRITOL KINASE"/>
    <property type="match status" value="1"/>
</dbReference>
<dbReference type="Pfam" id="PF08544">
    <property type="entry name" value="GHMP_kinases_C"/>
    <property type="match status" value="1"/>
</dbReference>
<dbReference type="Pfam" id="PF00288">
    <property type="entry name" value="GHMP_kinases_N"/>
    <property type="match status" value="1"/>
</dbReference>
<dbReference type="PIRSF" id="PIRSF000676">
    <property type="entry name" value="Homoser_kin"/>
    <property type="match status" value="1"/>
</dbReference>
<dbReference type="PRINTS" id="PR00958">
    <property type="entry name" value="HOMSERKINASE"/>
</dbReference>
<dbReference type="SUPFAM" id="SSF55060">
    <property type="entry name" value="GHMP Kinase, C-terminal domain"/>
    <property type="match status" value="1"/>
</dbReference>
<dbReference type="SUPFAM" id="SSF54211">
    <property type="entry name" value="Ribosomal protein S5 domain 2-like"/>
    <property type="match status" value="1"/>
</dbReference>
<dbReference type="PROSITE" id="PS00627">
    <property type="entry name" value="GHMP_KINASES_ATP"/>
    <property type="match status" value="1"/>
</dbReference>
<organism>
    <name type="scientific">Halothermothrix orenii (strain H 168 / OCM 544 / DSM 9562)</name>
    <dbReference type="NCBI Taxonomy" id="373903"/>
    <lineage>
        <taxon>Bacteria</taxon>
        <taxon>Bacillati</taxon>
        <taxon>Bacillota</taxon>
        <taxon>Clostridia</taxon>
        <taxon>Halanaerobiales</taxon>
        <taxon>Halothermotrichaceae</taxon>
        <taxon>Halothermothrix</taxon>
    </lineage>
</organism>
<name>KHSE_HALOH</name>
<accession>B8CW89</accession>
<feature type="chain" id="PRO_1000134253" description="Homoserine kinase">
    <location>
        <begin position="1"/>
        <end position="311"/>
    </location>
</feature>
<feature type="binding site" evidence="1">
    <location>
        <begin position="89"/>
        <end position="99"/>
    </location>
    <ligand>
        <name>ATP</name>
        <dbReference type="ChEBI" id="CHEBI:30616"/>
    </ligand>
</feature>
<comment type="function">
    <text evidence="1">Catalyzes the ATP-dependent phosphorylation of L-homoserine to L-homoserine phosphate.</text>
</comment>
<comment type="catalytic activity">
    <reaction evidence="1">
        <text>L-homoserine + ATP = O-phospho-L-homoserine + ADP + H(+)</text>
        <dbReference type="Rhea" id="RHEA:13985"/>
        <dbReference type="ChEBI" id="CHEBI:15378"/>
        <dbReference type="ChEBI" id="CHEBI:30616"/>
        <dbReference type="ChEBI" id="CHEBI:57476"/>
        <dbReference type="ChEBI" id="CHEBI:57590"/>
        <dbReference type="ChEBI" id="CHEBI:456216"/>
        <dbReference type="EC" id="2.7.1.39"/>
    </reaction>
</comment>
<comment type="pathway">
    <text evidence="1">Amino-acid biosynthesis; L-threonine biosynthesis; L-threonine from L-aspartate: step 4/5.</text>
</comment>
<comment type="subcellular location">
    <subcellularLocation>
        <location evidence="1">Cytoplasm</location>
    </subcellularLocation>
</comment>
<comment type="similarity">
    <text evidence="1">Belongs to the GHMP kinase family. Homoserine kinase subfamily.</text>
</comment>
<reference key="1">
    <citation type="journal article" date="2009" name="PLoS ONE">
        <title>Genome analysis of the anaerobic thermohalophilic bacterium Halothermothrix orenii.</title>
        <authorList>
            <person name="Mavromatis K."/>
            <person name="Ivanova N."/>
            <person name="Anderson I."/>
            <person name="Lykidis A."/>
            <person name="Hooper S.D."/>
            <person name="Sun H."/>
            <person name="Kunin V."/>
            <person name="Lapidus A."/>
            <person name="Hugenholtz P."/>
            <person name="Patel B."/>
            <person name="Kyrpides N.C."/>
        </authorList>
    </citation>
    <scope>NUCLEOTIDE SEQUENCE [LARGE SCALE GENOMIC DNA]</scope>
    <source>
        <strain>H 168 / OCM 544 / DSM 9562</strain>
    </source>
</reference>
<gene>
    <name evidence="1" type="primary">thrB</name>
    <name type="ordered locus">Hore_08010</name>
</gene>
<proteinExistence type="inferred from homology"/>